<name>CFA36_CAEEL</name>
<protein>
    <recommendedName>
        <fullName evidence="1">Cilia- and flagella-associated protein 36</fullName>
    </recommendedName>
    <alternativeName>
        <fullName evidence="1">Coiled-coil domain-containing protein 104</fullName>
    </alternativeName>
</protein>
<dbReference type="EMBL" id="BX284605">
    <property type="protein sequence ID" value="CCD74338.1"/>
    <property type="molecule type" value="Genomic_DNA"/>
</dbReference>
<dbReference type="EMBL" id="BX284605">
    <property type="protein sequence ID" value="CTQ86916.1"/>
    <property type="molecule type" value="Genomic_DNA"/>
</dbReference>
<dbReference type="RefSeq" id="NP_001300217.1">
    <molecule id="Q95Y36-2"/>
    <property type="nucleotide sequence ID" value="NM_001313288.3"/>
</dbReference>
<dbReference type="RefSeq" id="NP_503147.1">
    <molecule id="Q95Y36-1"/>
    <property type="nucleotide sequence ID" value="NM_070746.6"/>
</dbReference>
<dbReference type="SMR" id="Q95Y36"/>
<dbReference type="FunCoup" id="Q95Y36">
    <property type="interactions" value="251"/>
</dbReference>
<dbReference type="STRING" id="6239.Y108G3AL.3a.1"/>
<dbReference type="PaxDb" id="6239-Y108G3AL.3"/>
<dbReference type="PeptideAtlas" id="Q95Y36"/>
<dbReference type="EnsemblMetazoa" id="Y108G3AL.3a.1">
    <molecule id="Q95Y36-1"/>
    <property type="protein sequence ID" value="Y108G3AL.3a.1"/>
    <property type="gene ID" value="WBGene00022435"/>
</dbReference>
<dbReference type="EnsemblMetazoa" id="Y108G3AL.3b.1">
    <molecule id="Q95Y36-2"/>
    <property type="protein sequence ID" value="Y108G3AL.3b.1"/>
    <property type="gene ID" value="WBGene00022435"/>
</dbReference>
<dbReference type="GeneID" id="190931"/>
<dbReference type="KEGG" id="cel:CELE_Y108G3AL.3"/>
<dbReference type="UCSC" id="Y108G3AL.3">
    <molecule id="Q95Y36-1"/>
    <property type="organism name" value="c. elegans"/>
</dbReference>
<dbReference type="AGR" id="WB:WBGene00022435"/>
<dbReference type="CTD" id="190931"/>
<dbReference type="WormBase" id="Y108G3AL.3a">
    <molecule id="Q95Y36-1"/>
    <property type="protein sequence ID" value="CE29094"/>
    <property type="gene ID" value="WBGene00022435"/>
    <property type="gene designation" value="cfap-36"/>
</dbReference>
<dbReference type="WormBase" id="Y108G3AL.3b">
    <molecule id="Q95Y36-2"/>
    <property type="protein sequence ID" value="CE50736"/>
    <property type="gene ID" value="WBGene00022435"/>
    <property type="gene designation" value="cfap-36"/>
</dbReference>
<dbReference type="eggNOG" id="KOG4511">
    <property type="taxonomic scope" value="Eukaryota"/>
</dbReference>
<dbReference type="GeneTree" id="ENSGT00390000012785"/>
<dbReference type="HOGENOM" id="CLU_401829_0_0_1"/>
<dbReference type="InParanoid" id="Q95Y36"/>
<dbReference type="OMA" id="HEPRAKT"/>
<dbReference type="OrthoDB" id="272687at2759"/>
<dbReference type="PRO" id="PR:Q95Y36"/>
<dbReference type="Proteomes" id="UP000001940">
    <property type="component" value="Chromosome V"/>
</dbReference>
<dbReference type="Bgee" id="WBGene00022435">
    <property type="expression patterns" value="Expressed in anatomical system and 4 other cell types or tissues"/>
</dbReference>
<dbReference type="GO" id="GO:0005930">
    <property type="term" value="C:axoneme"/>
    <property type="evidence" value="ECO:0000314"/>
    <property type="project" value="UniProtKB"/>
</dbReference>
<dbReference type="GO" id="GO:0097546">
    <property type="term" value="C:ciliary base"/>
    <property type="evidence" value="ECO:0000314"/>
    <property type="project" value="UniProtKB"/>
</dbReference>
<dbReference type="Gene3D" id="1.20.1520.10">
    <property type="entry name" value="ADP-ribosylation factor-like 2-binding protein, domain"/>
    <property type="match status" value="1"/>
</dbReference>
<dbReference type="InterPro" id="IPR023379">
    <property type="entry name" value="BART_dom"/>
</dbReference>
<dbReference type="InterPro" id="IPR042541">
    <property type="entry name" value="BART_sf"/>
</dbReference>
<dbReference type="InterPro" id="IPR038888">
    <property type="entry name" value="CFAP36"/>
</dbReference>
<dbReference type="PANTHER" id="PTHR21532:SF0">
    <property type="entry name" value="CILIA- AND FLAGELLA-ASSOCIATED PROTEIN 36"/>
    <property type="match status" value="1"/>
</dbReference>
<dbReference type="PANTHER" id="PTHR21532">
    <property type="entry name" value="PHOSPHODIESTERASE HL"/>
    <property type="match status" value="1"/>
</dbReference>
<dbReference type="Pfam" id="PF11527">
    <property type="entry name" value="ARL2_Bind_BART"/>
    <property type="match status" value="1"/>
</dbReference>
<sequence>MLRRFSKKNKNPEGGSDDASRKQKKLLSKFLEFITSSIWSIPIASFIESQSVVFDRQQMETDVYIMIHKEYSQLIDTLIECFCEDVGTTPTELVAAIQLFNQKDVSQQYKVALEPLLAAQNFNVFVPMMMRKNIELQLQALQMIEFMCGLIPSVLQLEDGETLRNMKKLSPEETERYVLISVLRHSKDEYDSMQKGSEELEMMAQNSRIQREALEQEIRKEEILLQQALDEGARAQNQNQNQGTSSTQTDGVNAPLRSVAAMMAATFAIDTATSTDDVTYKFLDQSTGTMTSSTGVSVGTLTNTGVSSGTMTSGVDTGTDADGTVGRPKSAKRVGSAVGKRSVSKGTPSEDAKKSSGSSSPDEAEKSKRERPGTSVKKAIGIVAANSEMSSNGTQMDVPVDEEGTKKRPGTTSKKSIATVTASPEMSSKTTQMEPEQDGEGKKRPETSKGANERKYSNAGLEDIVGPKSSPHEEKKSSHPSSRKGSKATDENAPATRPPSRKAAGGSHEPRAKTPNQKNKDERPTTRRSSVDKNAPKRNDSVPRERKSSVSHDESKPPKPIGPLRGNKYDGDVVLGRAESPGIDHGPRRKNLNDVNSHLVDTNRLNSSDVRVRAQYLREQRDKLLQMKNAERIKQMTDIQQNASLERPKTAARAREILDKDKKEAVAIRKEISDKLKTQILTLHH</sequence>
<evidence type="ECO:0000250" key="1">
    <source>
        <dbReference type="UniProtKB" id="Q96G28"/>
    </source>
</evidence>
<evidence type="ECO:0000255" key="2"/>
<evidence type="ECO:0000256" key="3">
    <source>
        <dbReference type="SAM" id="MobiDB-lite"/>
    </source>
</evidence>
<evidence type="ECO:0000269" key="4">
    <source>
    </source>
</evidence>
<evidence type="ECO:0000303" key="5">
    <source>
    </source>
</evidence>
<evidence type="ECO:0000305" key="6"/>
<evidence type="ECO:0000312" key="7">
    <source>
        <dbReference type="Proteomes" id="UP000001940"/>
    </source>
</evidence>
<evidence type="ECO:0000312" key="8">
    <source>
        <dbReference type="WormBase" id="Y108G3AL.3a"/>
    </source>
</evidence>
<evidence type="ECO:0000312" key="9">
    <source>
        <dbReference type="WormBase" id="Y108G3AL.3b"/>
    </source>
</evidence>
<gene>
    <name evidence="8" type="primary">cfap-36</name>
    <name evidence="5 8" type="synonym">ccdc-104</name>
    <name evidence="8" type="ORF">Y108G3AL.3</name>
</gene>
<accession>Q95Y36</accession>
<accession>A0A0K3ASD3</accession>
<keyword id="KW-0025">Alternative splicing</keyword>
<keyword id="KW-0966">Cell projection</keyword>
<keyword id="KW-0969">Cilium</keyword>
<keyword id="KW-0175">Coiled coil</keyword>
<keyword id="KW-0963">Cytoplasm</keyword>
<keyword id="KW-0206">Cytoskeleton</keyword>
<keyword id="KW-1185">Reference proteome</keyword>
<organism evidence="7">
    <name type="scientific">Caenorhabditis elegans</name>
    <dbReference type="NCBI Taxonomy" id="6239"/>
    <lineage>
        <taxon>Eukaryota</taxon>
        <taxon>Metazoa</taxon>
        <taxon>Ecdysozoa</taxon>
        <taxon>Nematoda</taxon>
        <taxon>Chromadorea</taxon>
        <taxon>Rhabditida</taxon>
        <taxon>Rhabditina</taxon>
        <taxon>Rhabditomorpha</taxon>
        <taxon>Rhabditoidea</taxon>
        <taxon>Rhabditidae</taxon>
        <taxon>Peloderinae</taxon>
        <taxon>Caenorhabditis</taxon>
    </lineage>
</organism>
<reference evidence="7" key="1">
    <citation type="journal article" date="1998" name="Science">
        <title>Genome sequence of the nematode C. elegans: a platform for investigating biology.</title>
        <authorList>
            <consortium name="The C. elegans sequencing consortium"/>
        </authorList>
    </citation>
    <scope>NUCLEOTIDE SEQUENCE [LARGE SCALE GENOMIC DNA]</scope>
    <source>
        <strain evidence="7">Bristol N2</strain>
    </source>
</reference>
<reference evidence="6" key="2">
    <citation type="journal article" date="2016" name="PLoS Genet.">
        <title>Whole-organism developmental expression profiling identifies rab-28 as a novel ciliary GTPase associated with the BBSome and intraflagellar transport.</title>
        <authorList>
            <person name="Jensen V.L."/>
            <person name="Carter S."/>
            <person name="Sanders A.A."/>
            <person name="Li C."/>
            <person name="Kennedy J."/>
            <person name="Timbers T.A."/>
            <person name="Cai J."/>
            <person name="Scheidel N."/>
            <person name="Kennedy B.N."/>
            <person name="Morin R.D."/>
            <person name="Leroux M.R."/>
            <person name="Blacque O.E."/>
        </authorList>
    </citation>
    <scope>SUBCELLULAR LOCATION</scope>
    <scope>TISSUE SPECIFICITY</scope>
</reference>
<proteinExistence type="evidence at transcript level"/>
<comment type="subcellular location">
    <subcellularLocation>
        <location evidence="4">Cell projection</location>
        <location evidence="4">Cilium</location>
    </subcellularLocation>
    <subcellularLocation>
        <location evidence="4">Cytoplasm</location>
        <location evidence="4">Cytoskeleton</location>
        <location evidence="4">Cilium axoneme</location>
    </subcellularLocation>
    <text evidence="4">Localizes to the base of the cilium.</text>
</comment>
<comment type="alternative products">
    <event type="alternative splicing"/>
    <isoform>
        <id>Q95Y36-1</id>
        <name evidence="8">a</name>
        <sequence type="displayed"/>
    </isoform>
    <isoform>
        <id>Q95Y36-2</id>
        <name evidence="9">b</name>
        <sequence type="described" ref="VSP_058798"/>
    </isoform>
</comment>
<comment type="tissue specificity">
    <text evidence="4">Expressed in amphid and phasmid ciliated neurons.</text>
</comment>
<comment type="similarity">
    <text evidence="6">Belongs to the CFAP36 family.</text>
</comment>
<feature type="chain" id="PRO_0000439158" description="Cilia- and flagella-associated protein 36" evidence="6">
    <location>
        <begin position="1"/>
        <end position="685"/>
    </location>
</feature>
<feature type="region of interest" description="Disordered" evidence="3">
    <location>
        <begin position="1"/>
        <end position="20"/>
    </location>
</feature>
<feature type="region of interest" description="Disordered" evidence="3">
    <location>
        <begin position="287"/>
        <end position="573"/>
    </location>
</feature>
<feature type="coiled-coil region" evidence="2">
    <location>
        <begin position="197"/>
        <end position="242"/>
    </location>
</feature>
<feature type="compositionally biased region" description="Low complexity" evidence="3">
    <location>
        <begin position="287"/>
        <end position="310"/>
    </location>
</feature>
<feature type="compositionally biased region" description="Basic and acidic residues" evidence="3">
    <location>
        <begin position="363"/>
        <end position="372"/>
    </location>
</feature>
<feature type="compositionally biased region" description="Polar residues" evidence="3">
    <location>
        <begin position="410"/>
        <end position="434"/>
    </location>
</feature>
<feature type="compositionally biased region" description="Basic and acidic residues" evidence="3">
    <location>
        <begin position="439"/>
        <end position="456"/>
    </location>
</feature>
<feature type="compositionally biased region" description="Basic and acidic residues" evidence="3">
    <location>
        <begin position="508"/>
        <end position="557"/>
    </location>
</feature>
<feature type="splice variant" id="VSP_058798" description="In isoform b." evidence="6">
    <location>
        <begin position="1"/>
        <end position="127"/>
    </location>
</feature>